<keyword id="KW-0687">Ribonucleoprotein</keyword>
<keyword id="KW-0689">Ribosomal protein</keyword>
<reference key="1">
    <citation type="journal article" date="2007" name="BMC Microbiol.">
        <title>Subtle genetic changes enhance virulence of methicillin resistant and sensitive Staphylococcus aureus.</title>
        <authorList>
            <person name="Highlander S.K."/>
            <person name="Hulten K.G."/>
            <person name="Qin X."/>
            <person name="Jiang H."/>
            <person name="Yerrapragada S."/>
            <person name="Mason E.O. Jr."/>
            <person name="Shang Y."/>
            <person name="Williams T.M."/>
            <person name="Fortunov R.M."/>
            <person name="Liu Y."/>
            <person name="Igboeli O."/>
            <person name="Petrosino J."/>
            <person name="Tirumalai M."/>
            <person name="Uzman A."/>
            <person name="Fox G.E."/>
            <person name="Cardenas A.M."/>
            <person name="Muzny D.M."/>
            <person name="Hemphill L."/>
            <person name="Ding Y."/>
            <person name="Dugan S."/>
            <person name="Blyth P.R."/>
            <person name="Buhay C.J."/>
            <person name="Dinh H.H."/>
            <person name="Hawes A.C."/>
            <person name="Holder M."/>
            <person name="Kovar C.L."/>
            <person name="Lee S.L."/>
            <person name="Liu W."/>
            <person name="Nazareth L.V."/>
            <person name="Wang Q."/>
            <person name="Zhou J."/>
            <person name="Kaplan S.L."/>
            <person name="Weinstock G.M."/>
        </authorList>
    </citation>
    <scope>NUCLEOTIDE SEQUENCE [LARGE SCALE GENOMIC DNA]</scope>
    <source>
        <strain>USA300 / TCH1516</strain>
    </source>
</reference>
<evidence type="ECO:0000255" key="1">
    <source>
        <dbReference type="HAMAP-Rule" id="MF_01368"/>
    </source>
</evidence>
<evidence type="ECO:0000305" key="2"/>
<comment type="subunit">
    <text evidence="1">Part of the 50S ribosomal subunit. Contacts protein L32.</text>
</comment>
<comment type="similarity">
    <text evidence="1">Belongs to the bacterial ribosomal protein bL17 family.</text>
</comment>
<protein>
    <recommendedName>
        <fullName evidence="1">Large ribosomal subunit protein bL17</fullName>
    </recommendedName>
    <alternativeName>
        <fullName evidence="2">50S ribosomal protein L17</fullName>
    </alternativeName>
</protein>
<sequence length="122" mass="13748">MGYRKLGRTSDQRKAMLRDLATSLIISERIETTEARAKEVRSVVEKLITLGKKGDLASRRNAAKTLRNVEILNEDETTQTALQKLFGEIAERYTERQGGYTRILKQGPRRGDGAESVIIELV</sequence>
<dbReference type="EMBL" id="CP000730">
    <property type="protein sequence ID" value="ABX30207.1"/>
    <property type="molecule type" value="Genomic_DNA"/>
</dbReference>
<dbReference type="RefSeq" id="WP_000542274.1">
    <property type="nucleotide sequence ID" value="NC_010079.1"/>
</dbReference>
<dbReference type="SMR" id="A8Z330"/>
<dbReference type="GeneID" id="98346535"/>
<dbReference type="KEGG" id="sax:USA300HOU_2214"/>
<dbReference type="HOGENOM" id="CLU_074407_2_2_9"/>
<dbReference type="GO" id="GO:0022625">
    <property type="term" value="C:cytosolic large ribosomal subunit"/>
    <property type="evidence" value="ECO:0007669"/>
    <property type="project" value="TreeGrafter"/>
</dbReference>
<dbReference type="GO" id="GO:0003735">
    <property type="term" value="F:structural constituent of ribosome"/>
    <property type="evidence" value="ECO:0007669"/>
    <property type="project" value="InterPro"/>
</dbReference>
<dbReference type="GO" id="GO:0006412">
    <property type="term" value="P:translation"/>
    <property type="evidence" value="ECO:0007669"/>
    <property type="project" value="UniProtKB-UniRule"/>
</dbReference>
<dbReference type="FunFam" id="3.90.1030.10:FF:000002">
    <property type="entry name" value="50S ribosomal protein L17"/>
    <property type="match status" value="1"/>
</dbReference>
<dbReference type="Gene3D" id="3.90.1030.10">
    <property type="entry name" value="Ribosomal protein L17"/>
    <property type="match status" value="1"/>
</dbReference>
<dbReference type="HAMAP" id="MF_01368">
    <property type="entry name" value="Ribosomal_bL17"/>
    <property type="match status" value="1"/>
</dbReference>
<dbReference type="InterPro" id="IPR000456">
    <property type="entry name" value="Ribosomal_bL17"/>
</dbReference>
<dbReference type="InterPro" id="IPR047859">
    <property type="entry name" value="Ribosomal_bL17_CS"/>
</dbReference>
<dbReference type="InterPro" id="IPR036373">
    <property type="entry name" value="Ribosomal_bL17_sf"/>
</dbReference>
<dbReference type="NCBIfam" id="TIGR00059">
    <property type="entry name" value="L17"/>
    <property type="match status" value="1"/>
</dbReference>
<dbReference type="PANTHER" id="PTHR14413:SF16">
    <property type="entry name" value="LARGE RIBOSOMAL SUBUNIT PROTEIN BL17M"/>
    <property type="match status" value="1"/>
</dbReference>
<dbReference type="PANTHER" id="PTHR14413">
    <property type="entry name" value="RIBOSOMAL PROTEIN L17"/>
    <property type="match status" value="1"/>
</dbReference>
<dbReference type="Pfam" id="PF01196">
    <property type="entry name" value="Ribosomal_L17"/>
    <property type="match status" value="1"/>
</dbReference>
<dbReference type="SUPFAM" id="SSF64263">
    <property type="entry name" value="Prokaryotic ribosomal protein L17"/>
    <property type="match status" value="1"/>
</dbReference>
<dbReference type="PROSITE" id="PS01167">
    <property type="entry name" value="RIBOSOMAL_L17"/>
    <property type="match status" value="1"/>
</dbReference>
<organism>
    <name type="scientific">Staphylococcus aureus (strain USA300 / TCH1516)</name>
    <dbReference type="NCBI Taxonomy" id="451516"/>
    <lineage>
        <taxon>Bacteria</taxon>
        <taxon>Bacillati</taxon>
        <taxon>Bacillota</taxon>
        <taxon>Bacilli</taxon>
        <taxon>Bacillales</taxon>
        <taxon>Staphylococcaceae</taxon>
        <taxon>Staphylococcus</taxon>
    </lineage>
</organism>
<gene>
    <name evidence="1" type="primary">rplQ</name>
    <name type="ordered locus">USA300HOU_2214</name>
</gene>
<accession>A8Z330</accession>
<name>RL17_STAAT</name>
<proteinExistence type="inferred from homology"/>
<feature type="chain" id="PRO_1000087199" description="Large ribosomal subunit protein bL17">
    <location>
        <begin position="1"/>
        <end position="122"/>
    </location>
</feature>